<sequence>DKGFGFITPDDGSKDVFVHFSAIQNDGYKSLDEGQKVSFTIESGAK</sequence>
<organism>
    <name type="scientific">Shigella boydii</name>
    <dbReference type="NCBI Taxonomy" id="621"/>
    <lineage>
        <taxon>Bacteria</taxon>
        <taxon>Pseudomonadati</taxon>
        <taxon>Pseudomonadota</taxon>
        <taxon>Gammaproteobacteria</taxon>
        <taxon>Enterobacterales</taxon>
        <taxon>Enterobacteriaceae</taxon>
        <taxon>Shigella</taxon>
    </lineage>
</organism>
<evidence type="ECO:0000250" key="1"/>
<reference key="1">
    <citation type="journal article" date="1997" name="J. Ind. Microbiol. Biotechnol.">
        <title>Detection and speciation of bacteria through PCR using universal major cold-shock protein primer oligomers.</title>
        <authorList>
            <person name="Francis K.P."/>
            <person name="Stewart G.S.A.B."/>
        </authorList>
    </citation>
    <scope>NUCLEOTIDE SEQUENCE [GENOMIC DNA]</scope>
    <source>
        <strain>NCTC 9327</strain>
    </source>
</reference>
<keyword id="KW-0010">Activator</keyword>
<keyword id="KW-0963">Cytoplasm</keyword>
<keyword id="KW-0238">DNA-binding</keyword>
<keyword id="KW-0346">Stress response</keyword>
<keyword id="KW-0804">Transcription</keyword>
<keyword id="KW-0805">Transcription regulation</keyword>
<comment type="subunit">
    <text evidence="1">Homodimer.</text>
</comment>
<comment type="subcellular location">
    <subcellularLocation>
        <location evidence="1">Cytoplasm</location>
    </subcellularLocation>
</comment>
<comment type="induction">
    <text evidence="1">In response to low temperature.</text>
</comment>
<dbReference type="EMBL" id="U60036">
    <property type="protein sequence ID" value="AAC80240.1"/>
    <property type="molecule type" value="Genomic_DNA"/>
</dbReference>
<dbReference type="SMR" id="Q53816"/>
<dbReference type="GO" id="GO:0005829">
    <property type="term" value="C:cytosol"/>
    <property type="evidence" value="ECO:0007669"/>
    <property type="project" value="UniProtKB-ARBA"/>
</dbReference>
<dbReference type="GO" id="GO:0003677">
    <property type="term" value="F:DNA binding"/>
    <property type="evidence" value="ECO:0007669"/>
    <property type="project" value="UniProtKB-KW"/>
</dbReference>
<dbReference type="CDD" id="cd04458">
    <property type="entry name" value="CSP_CDS"/>
    <property type="match status" value="1"/>
</dbReference>
<dbReference type="Gene3D" id="2.40.50.140">
    <property type="entry name" value="Nucleic acid-binding proteins"/>
    <property type="match status" value="1"/>
</dbReference>
<dbReference type="InterPro" id="IPR012156">
    <property type="entry name" value="Cold_shock_CspA"/>
</dbReference>
<dbReference type="InterPro" id="IPR011129">
    <property type="entry name" value="CSD"/>
</dbReference>
<dbReference type="InterPro" id="IPR019844">
    <property type="entry name" value="CSD_CS"/>
</dbReference>
<dbReference type="InterPro" id="IPR002059">
    <property type="entry name" value="CSP_DNA-bd"/>
</dbReference>
<dbReference type="InterPro" id="IPR012340">
    <property type="entry name" value="NA-bd_OB-fold"/>
</dbReference>
<dbReference type="PANTHER" id="PTHR46565">
    <property type="entry name" value="COLD SHOCK DOMAIN PROTEIN 2"/>
    <property type="match status" value="1"/>
</dbReference>
<dbReference type="PANTHER" id="PTHR46565:SF20">
    <property type="entry name" value="COLD SHOCK DOMAIN-CONTAINING PROTEIN 4"/>
    <property type="match status" value="1"/>
</dbReference>
<dbReference type="Pfam" id="PF00313">
    <property type="entry name" value="CSD"/>
    <property type="match status" value="1"/>
</dbReference>
<dbReference type="PIRSF" id="PIRSF002599">
    <property type="entry name" value="Cold_shock_A"/>
    <property type="match status" value="1"/>
</dbReference>
<dbReference type="PRINTS" id="PR00050">
    <property type="entry name" value="COLDSHOCK"/>
</dbReference>
<dbReference type="SMART" id="SM00357">
    <property type="entry name" value="CSP"/>
    <property type="match status" value="1"/>
</dbReference>
<dbReference type="SUPFAM" id="SSF50249">
    <property type="entry name" value="Nucleic acid-binding proteins"/>
    <property type="match status" value="1"/>
</dbReference>
<dbReference type="PROSITE" id="PS00352">
    <property type="entry name" value="CSD_1"/>
    <property type="match status" value="1"/>
</dbReference>
<dbReference type="PROSITE" id="PS51857">
    <property type="entry name" value="CSD_2"/>
    <property type="match status" value="1"/>
</dbReference>
<protein>
    <recommendedName>
        <fullName>Major cold shock protein</fullName>
    </recommendedName>
</protein>
<accession>Q53816</accession>
<gene>
    <name type="primary">cspA</name>
</gene>
<proteinExistence type="inferred from homology"/>
<feature type="chain" id="PRO_0000100328" description="Major cold shock protein">
    <location>
        <begin position="1" status="less than"/>
        <end position="46" status="greater than"/>
    </location>
</feature>
<feature type="domain" description="CSD">
    <location>
        <begin position="1" status="less than"/>
        <end position="46" status="greater than"/>
    </location>
</feature>
<feature type="non-terminal residue">
    <location>
        <position position="1"/>
    </location>
</feature>
<feature type="non-terminal residue">
    <location>
        <position position="46"/>
    </location>
</feature>
<name>CSPA_SHIBO</name>